<name>CPFC_MYCPA</name>
<reference key="1">
    <citation type="journal article" date="2005" name="Proc. Natl. Acad. Sci. U.S.A.">
        <title>The complete genome sequence of Mycobacterium avium subspecies paratuberculosis.</title>
        <authorList>
            <person name="Li L."/>
            <person name="Bannantine J.P."/>
            <person name="Zhang Q."/>
            <person name="Amonsin A."/>
            <person name="May B.J."/>
            <person name="Alt D."/>
            <person name="Banerji N."/>
            <person name="Kanjilal S."/>
            <person name="Kapur V."/>
        </authorList>
    </citation>
    <scope>NUCLEOTIDE SEQUENCE [LARGE SCALE GENOMIC DNA]</scope>
    <source>
        <strain>ATCC BAA-968 / K-10</strain>
    </source>
</reference>
<dbReference type="EC" id="4.99.1.9" evidence="1"/>
<dbReference type="EMBL" id="AE016958">
    <property type="protein sequence ID" value="AAS03528.1"/>
    <property type="molecule type" value="Genomic_DNA"/>
</dbReference>
<dbReference type="RefSeq" id="WP_003876104.1">
    <property type="nucleotide sequence ID" value="NZ_CP106873.1"/>
</dbReference>
<dbReference type="SMR" id="Q740Y1"/>
<dbReference type="STRING" id="262316.MAP_1211"/>
<dbReference type="KEGG" id="mpa:MAP_1211"/>
<dbReference type="eggNOG" id="COG0276">
    <property type="taxonomic scope" value="Bacteria"/>
</dbReference>
<dbReference type="HOGENOM" id="CLU_018884_2_0_11"/>
<dbReference type="UniPathway" id="UPA00252"/>
<dbReference type="Proteomes" id="UP000000580">
    <property type="component" value="Chromosome"/>
</dbReference>
<dbReference type="GO" id="GO:0005737">
    <property type="term" value="C:cytoplasm"/>
    <property type="evidence" value="ECO:0007669"/>
    <property type="project" value="UniProtKB-SubCell"/>
</dbReference>
<dbReference type="GO" id="GO:0004325">
    <property type="term" value="F:ferrochelatase activity"/>
    <property type="evidence" value="ECO:0007669"/>
    <property type="project" value="UniProtKB-UniRule"/>
</dbReference>
<dbReference type="GO" id="GO:0046872">
    <property type="term" value="F:metal ion binding"/>
    <property type="evidence" value="ECO:0007669"/>
    <property type="project" value="UniProtKB-KW"/>
</dbReference>
<dbReference type="GO" id="GO:0006783">
    <property type="term" value="P:heme biosynthetic process"/>
    <property type="evidence" value="ECO:0007669"/>
    <property type="project" value="UniProtKB-UniRule"/>
</dbReference>
<dbReference type="CDD" id="cd00419">
    <property type="entry name" value="Ferrochelatase_C"/>
    <property type="match status" value="1"/>
</dbReference>
<dbReference type="CDD" id="cd03411">
    <property type="entry name" value="Ferrochelatase_N"/>
    <property type="match status" value="1"/>
</dbReference>
<dbReference type="Gene3D" id="3.40.50.1400">
    <property type="match status" value="2"/>
</dbReference>
<dbReference type="HAMAP" id="MF_00323">
    <property type="entry name" value="Ferrochelatase"/>
    <property type="match status" value="1"/>
</dbReference>
<dbReference type="InterPro" id="IPR001015">
    <property type="entry name" value="Ferrochelatase"/>
</dbReference>
<dbReference type="InterPro" id="IPR019772">
    <property type="entry name" value="Ferrochelatase_AS"/>
</dbReference>
<dbReference type="InterPro" id="IPR033644">
    <property type="entry name" value="Ferrochelatase_C"/>
</dbReference>
<dbReference type="InterPro" id="IPR033659">
    <property type="entry name" value="Ferrochelatase_N"/>
</dbReference>
<dbReference type="NCBIfam" id="TIGR00109">
    <property type="entry name" value="hemH"/>
    <property type="match status" value="1"/>
</dbReference>
<dbReference type="NCBIfam" id="NF000689">
    <property type="entry name" value="PRK00035.2-1"/>
    <property type="match status" value="1"/>
</dbReference>
<dbReference type="PANTHER" id="PTHR11108">
    <property type="entry name" value="FERROCHELATASE"/>
    <property type="match status" value="1"/>
</dbReference>
<dbReference type="PANTHER" id="PTHR11108:SF1">
    <property type="entry name" value="FERROCHELATASE, MITOCHONDRIAL"/>
    <property type="match status" value="1"/>
</dbReference>
<dbReference type="Pfam" id="PF00762">
    <property type="entry name" value="Ferrochelatase"/>
    <property type="match status" value="1"/>
</dbReference>
<dbReference type="SUPFAM" id="SSF53800">
    <property type="entry name" value="Chelatase"/>
    <property type="match status" value="1"/>
</dbReference>
<dbReference type="PROSITE" id="PS00534">
    <property type="entry name" value="FERROCHELATASE"/>
    <property type="match status" value="1"/>
</dbReference>
<feature type="chain" id="PRO_0000175166" description="Coproporphyrin III ferrochelatase">
    <location>
        <begin position="1"/>
        <end position="336"/>
    </location>
</feature>
<feature type="binding site" evidence="1">
    <location>
        <position position="52"/>
    </location>
    <ligand>
        <name>Fe-coproporphyrin III</name>
        <dbReference type="ChEBI" id="CHEBI:68438"/>
    </ligand>
</feature>
<feature type="binding site" evidence="1">
    <location>
        <position position="116"/>
    </location>
    <ligand>
        <name>Fe-coproporphyrin III</name>
        <dbReference type="ChEBI" id="CHEBI:68438"/>
    </ligand>
</feature>
<feature type="binding site" evidence="1">
    <location>
        <position position="172"/>
    </location>
    <ligand>
        <name>Fe(2+)</name>
        <dbReference type="ChEBI" id="CHEBI:29033"/>
    </ligand>
</feature>
<feature type="binding site" evidence="1">
    <location>
        <position position="255"/>
    </location>
    <ligand>
        <name>Fe(2+)</name>
        <dbReference type="ChEBI" id="CHEBI:29033"/>
    </ligand>
</feature>
<protein>
    <recommendedName>
        <fullName evidence="1">Coproporphyrin III ferrochelatase</fullName>
        <ecNumber evidence="1">4.99.1.9</ecNumber>
    </recommendedName>
</protein>
<gene>
    <name evidence="1" type="primary">cpfC</name>
    <name type="ordered locus">MAP_1211</name>
</gene>
<accession>Q740Y1</accession>
<sequence length="336" mass="36321">MDFDAVLLLSFGGPEGPEQVRPFLENVTRGRGVPPERLDHVAEHYLHFGGVSPINGINRALIEQLRAAQDLPVYFGNRNWEPYVEDTVKVMRDNGIRRAAVFTTSAWSGYSSCTQYVEDIARARTAAGTGAPELVKLRPYFDHPLFVEMFAGAIADAAAKVPAGARLVFTAHSVPVAADERLGPRLYSRQVAYAARLVAAAAGYAEHDLVWQSRSGPPQVRWLEPDVADHLRALAESGTRAVIVCPIGFVADHIEVVWDLDEELRAQAESAGMLMARASTPNAQPRFARLAADLIDELRCGRTPARVTGPDPVPGCLASVNGAPCRPPHCAAQATG</sequence>
<proteinExistence type="inferred from homology"/>
<organism>
    <name type="scientific">Mycolicibacterium paratuberculosis (strain ATCC BAA-968 / K-10)</name>
    <name type="common">Mycobacterium paratuberculosis</name>
    <dbReference type="NCBI Taxonomy" id="262316"/>
    <lineage>
        <taxon>Bacteria</taxon>
        <taxon>Bacillati</taxon>
        <taxon>Actinomycetota</taxon>
        <taxon>Actinomycetes</taxon>
        <taxon>Mycobacteriales</taxon>
        <taxon>Mycobacteriaceae</taxon>
        <taxon>Mycobacterium</taxon>
        <taxon>Mycobacterium avium complex (MAC)</taxon>
    </lineage>
</organism>
<comment type="function">
    <text evidence="1">Involved in coproporphyrin-dependent heme b biosynthesis. Catalyzes the insertion of ferrous iron into coproporphyrin III to form Fe-coproporphyrin III.</text>
</comment>
<comment type="catalytic activity">
    <reaction evidence="1">
        <text>Fe-coproporphyrin III + 2 H(+) = coproporphyrin III + Fe(2+)</text>
        <dbReference type="Rhea" id="RHEA:49572"/>
        <dbReference type="ChEBI" id="CHEBI:15378"/>
        <dbReference type="ChEBI" id="CHEBI:29033"/>
        <dbReference type="ChEBI" id="CHEBI:68438"/>
        <dbReference type="ChEBI" id="CHEBI:131725"/>
        <dbReference type="EC" id="4.99.1.9"/>
    </reaction>
    <physiologicalReaction direction="right-to-left" evidence="1">
        <dbReference type="Rhea" id="RHEA:49574"/>
    </physiologicalReaction>
</comment>
<comment type="pathway">
    <text evidence="1">Porphyrin-containing compound metabolism; protoheme biosynthesis.</text>
</comment>
<comment type="subcellular location">
    <subcellularLocation>
        <location evidence="1">Cytoplasm</location>
    </subcellularLocation>
</comment>
<comment type="similarity">
    <text evidence="1">Belongs to the ferrochelatase family.</text>
</comment>
<keyword id="KW-0963">Cytoplasm</keyword>
<keyword id="KW-0350">Heme biosynthesis</keyword>
<keyword id="KW-0408">Iron</keyword>
<keyword id="KW-0456">Lyase</keyword>
<keyword id="KW-0479">Metal-binding</keyword>
<keyword id="KW-0627">Porphyrin biosynthesis</keyword>
<keyword id="KW-1185">Reference proteome</keyword>
<evidence type="ECO:0000255" key="1">
    <source>
        <dbReference type="HAMAP-Rule" id="MF_00323"/>
    </source>
</evidence>